<comment type="similarity">
    <text evidence="1">Belongs to the coronaviruses ns12.7 protein family.</text>
</comment>
<sequence length="109" mass="12752">MDIWKPETKYLRYTNGFNVSDLEDACFKFNYKFPKVGYCRVPSHAWCRNQGSFCATLTLYGKSKHYDKYFGVITGFTAFANTVEEAVNKLVFLAVDFITWRRQELNVYG</sequence>
<gene>
    <name type="ORF">5a</name>
</gene>
<protein>
    <recommendedName>
        <fullName>Non-structural protein of 12.7 kDa</fullName>
        <shortName>ns12.7</shortName>
    </recommendedName>
    <alternativeName>
        <fullName>12.7 kDa accessory protein</fullName>
    </alternativeName>
</protein>
<feature type="chain" id="PRO_0000283952" description="Non-structural protein of 12.7 kDa">
    <location>
        <begin position="1"/>
        <end position="109"/>
    </location>
</feature>
<organismHost>
    <name type="scientific">Bos taurus</name>
    <name type="common">Bovine</name>
    <dbReference type="NCBI Taxonomy" id="9913"/>
</organismHost>
<name>NS12_CVBOK</name>
<evidence type="ECO:0000305" key="1"/>
<organism>
    <name type="scientific">Bovine coronavirus (strain OK-0514)</name>
    <name type="common">BCoV</name>
    <name type="synonym">BCV</name>
    <dbReference type="NCBI Taxonomy" id="231432"/>
    <lineage>
        <taxon>Viruses</taxon>
        <taxon>Riboviria</taxon>
        <taxon>Orthornavirae</taxon>
        <taxon>Pisuviricota</taxon>
        <taxon>Pisoniviricetes</taxon>
        <taxon>Nidovirales</taxon>
        <taxon>Cornidovirineae</taxon>
        <taxon>Coronaviridae</taxon>
        <taxon>Orthocoronavirinae</taxon>
        <taxon>Betacoronavirus</taxon>
        <taxon>Embecovirus</taxon>
        <taxon>Betacoronavirus 1</taxon>
    </lineage>
</organism>
<accession>Q9QAQ5</accession>
<proteinExistence type="inferred from homology"/>
<dbReference type="EMBL" id="AF058944">
    <property type="protein sequence ID" value="AAF25522.1"/>
    <property type="molecule type" value="Genomic_RNA"/>
</dbReference>
<dbReference type="InterPro" id="IPR006841">
    <property type="entry name" value="Corona_NS2"/>
</dbReference>
<dbReference type="Pfam" id="PF04753">
    <property type="entry name" value="Corona_NS12-7"/>
    <property type="match status" value="1"/>
</dbReference>
<reference key="1">
    <citation type="journal article" date="1998" name="Virus Genes">
        <title>Nucleotide and predicted amino acid sequences of all genes encoded by the 3' genomic portion (9.5 kb) of respiratory bovine coronaviruses and comparisons among respiratory and enteric coronaviruses.</title>
        <authorList>
            <person name="Chouljenko V.N."/>
            <person name="Kousoulas K.G."/>
            <person name="Lin X.Q."/>
            <person name="Storz J."/>
        </authorList>
    </citation>
    <scope>NUCLEOTIDE SEQUENCE [GENOMIC RNA]</scope>
</reference>